<reference evidence="12" key="1">
    <citation type="journal article" date="2002" name="Insect Biochem. Mol. Biol.">
        <title>Amino acid sequence and structure modeling of savignin, a thrombin inhibitor from the tick, Ornithodoros savignyi.</title>
        <authorList>
            <person name="Mans B.J."/>
            <person name="Louw A.I."/>
            <person name="Neitz A.W."/>
        </authorList>
    </citation>
    <scope>NUCLEOTIDE SEQUENCE [MRNA]</scope>
    <scope>3D-STRUCTURE MODELING</scope>
    <scope>FUNCTION</scope>
    <source>
        <tissue>Salivary gland</tissue>
    </source>
</reference>
<reference key="2">
    <citation type="journal article" date="1999" name="Exp. Parasitol.">
        <title>Savignin, a potent thrombin inhibitor isolated from the salivary glands of the tick Ornithodoros savignyi (Acari: Argasidae).</title>
        <authorList>
            <person name="Nienaber J."/>
            <person name="Gaspar A.R."/>
            <person name="Neitz A.W."/>
        </authorList>
    </citation>
    <scope>PROTEIN SEQUENCE OF 17-27</scope>
    <scope>FUNCTION</scope>
    <scope>MASS SPECTROMETRY</scope>
    <source>
        <tissue>Salivary gland</tissue>
    </source>
</reference>
<protein>
    <recommendedName>
        <fullName evidence="7 8">Thrombin inhibitor savignin</fullName>
    </recommendedName>
</protein>
<dbReference type="EMBL" id="AF321524">
    <property type="protein sequence ID" value="AAL37210.1"/>
    <property type="molecule type" value="mRNA"/>
</dbReference>
<dbReference type="SMR" id="Q8WPG5"/>
<dbReference type="MEROPS" id="I02.035"/>
<dbReference type="GO" id="GO:0005576">
    <property type="term" value="C:extracellular region"/>
    <property type="evidence" value="ECO:0007669"/>
    <property type="project" value="UniProtKB-SubCell"/>
</dbReference>
<dbReference type="GO" id="GO:0030133">
    <property type="term" value="C:transport vesicle"/>
    <property type="evidence" value="ECO:0007669"/>
    <property type="project" value="UniProtKB-SubCell"/>
</dbReference>
<dbReference type="GO" id="GO:0004867">
    <property type="term" value="F:serine-type endopeptidase inhibitor activity"/>
    <property type="evidence" value="ECO:0007669"/>
    <property type="project" value="InterPro"/>
</dbReference>
<dbReference type="GO" id="GO:0090729">
    <property type="term" value="F:toxin activity"/>
    <property type="evidence" value="ECO:0007669"/>
    <property type="project" value="UniProtKB-KW"/>
</dbReference>
<dbReference type="GO" id="GO:0044562">
    <property type="term" value="P:envenomation resulting in negative regulation of voltage-gated potassium channel activity in another organism"/>
    <property type="evidence" value="ECO:0007669"/>
    <property type="project" value="UniProtKB-ARBA"/>
</dbReference>
<dbReference type="CDD" id="cd22612">
    <property type="entry name" value="Kunitz_ornithodorin_C-like"/>
    <property type="match status" value="1"/>
</dbReference>
<dbReference type="Gene3D" id="4.10.410.10">
    <property type="entry name" value="Pancreatic trypsin inhibitor Kunitz domain"/>
    <property type="match status" value="2"/>
</dbReference>
<dbReference type="InterPro" id="IPR002223">
    <property type="entry name" value="Kunitz_BPTI"/>
</dbReference>
<dbReference type="InterPro" id="IPR036880">
    <property type="entry name" value="Kunitz_BPTI_sf"/>
</dbReference>
<dbReference type="Pfam" id="PF00014">
    <property type="entry name" value="Kunitz_BPTI"/>
    <property type="match status" value="1"/>
</dbReference>
<dbReference type="SUPFAM" id="SSF57362">
    <property type="entry name" value="BPTI-like"/>
    <property type="match status" value="2"/>
</dbReference>
<name>KUNI_ORNKA</name>
<feature type="signal peptide" evidence="3">
    <location>
        <begin position="1"/>
        <end position="16"/>
    </location>
</feature>
<feature type="chain" id="PRO_5004315397" description="Thrombin inhibitor savignin" evidence="10 11">
    <location>
        <begin position="17"/>
        <end position="134"/>
    </location>
</feature>
<feature type="domain" description="BPTI/Kunitz inhibitor 1" evidence="1 4">
    <location>
        <begin position="17"/>
        <end position="69"/>
    </location>
</feature>
<feature type="domain" description="BPTI/Kunitz inhibitor" evidence="4">
    <location>
        <begin position="83"/>
        <end position="129"/>
    </location>
</feature>
<feature type="region of interest" description="Linker" evidence="9">
    <location>
        <begin position="70"/>
        <end position="82"/>
    </location>
</feature>
<feature type="disulfide bond" evidence="1">
    <location>
        <begin position="21"/>
        <end position="66"/>
    </location>
</feature>
<feature type="disulfide bond" evidence="1">
    <location>
        <begin position="29"/>
        <end position="51"/>
    </location>
</feature>
<feature type="disulfide bond" evidence="1">
    <location>
        <begin position="45"/>
        <end position="62"/>
    </location>
</feature>
<feature type="disulfide bond" evidence="1">
    <location>
        <begin position="81"/>
        <end position="129"/>
    </location>
</feature>
<feature type="disulfide bond" evidence="1">
    <location>
        <begin position="89"/>
        <end position="112"/>
    </location>
</feature>
<feature type="disulfide bond" evidence="1">
    <location>
        <begin position="105"/>
        <end position="125"/>
    </location>
</feature>
<evidence type="ECO:0000250" key="1">
    <source>
        <dbReference type="UniProtKB" id="P56409"/>
    </source>
</evidence>
<evidence type="ECO:0000250" key="2">
    <source>
        <dbReference type="UniProtKB" id="Q8MVZ2"/>
    </source>
</evidence>
<evidence type="ECO:0000255" key="3"/>
<evidence type="ECO:0000255" key="4">
    <source>
        <dbReference type="PROSITE-ProRule" id="PRU00031"/>
    </source>
</evidence>
<evidence type="ECO:0000269" key="5">
    <source>
    </source>
</evidence>
<evidence type="ECO:0000269" key="6">
    <source>
    </source>
</evidence>
<evidence type="ECO:0000303" key="7">
    <source>
    </source>
</evidence>
<evidence type="ECO:0000303" key="8">
    <source>
    </source>
</evidence>
<evidence type="ECO:0000305" key="9"/>
<evidence type="ECO:0000305" key="10">
    <source>
    </source>
</evidence>
<evidence type="ECO:0000305" key="11">
    <source>
    </source>
</evidence>
<evidence type="ECO:0000312" key="12">
    <source>
        <dbReference type="EMBL" id="AAL37210.1"/>
    </source>
</evidence>
<accession>Q8WPG5</accession>
<organism>
    <name type="scientific">Ornithodoros kalahariensis</name>
    <name type="common">Tick</name>
    <dbReference type="NCBI Taxonomy" id="1580572"/>
    <lineage>
        <taxon>Eukaryota</taxon>
        <taxon>Metazoa</taxon>
        <taxon>Ecdysozoa</taxon>
        <taxon>Arthropoda</taxon>
        <taxon>Chelicerata</taxon>
        <taxon>Arachnida</taxon>
        <taxon>Acari</taxon>
        <taxon>Parasitiformes</taxon>
        <taxon>Ixodida</taxon>
        <taxon>Ixodoidea</taxon>
        <taxon>Argasidae</taxon>
        <taxon>Ornithodorinae</taxon>
        <taxon>Ornithodoros</taxon>
    </lineage>
</organism>
<sequence length="134" mass="14100">MLFYVVITLVAGTVSGLNVRCNNPHTANCENGAKLESYFREGETCVGSPACPGEGYATKEDCQKACFPGGGDHSTNVDSSCFGQPPTSCETGAEVTYYDSGSRTCKVLQHGCPSSENAFDSEIECQVACGVSME</sequence>
<keyword id="KW-1203">Blood coagulation cascade inhibiting toxin</keyword>
<keyword id="KW-0968">Cytoplasmic vesicle</keyword>
<keyword id="KW-0903">Direct protein sequencing</keyword>
<keyword id="KW-1015">Disulfide bond</keyword>
<keyword id="KW-1199">Hemostasis impairing toxin</keyword>
<keyword id="KW-1201">Platelet aggregation inhibiting toxin</keyword>
<keyword id="KW-0677">Repeat</keyword>
<keyword id="KW-0964">Secreted</keyword>
<keyword id="KW-0732">Signal</keyword>
<keyword id="KW-0800">Toxin</keyword>
<comment type="function">
    <text evidence="5 6">Tick salivary thrombin inhibitor that plays an important part in the anti-hemostatic strategy of ticks. Inhibits thrombin-induced platelet aggregation, but has no effect on ADP- or collagen-induced aggregation (PubMed:10502470). Is a competitive, slow-, tight-binding inhibitor of thrombin (Ki=4.89 pM) (PubMed:10502470). It requires thrombin fibrinogen-binding exosite for optimal inhibition, as its affinity for thrombin lacking the exosite is much lower (Ki=22.3 nM) (PubMed:10502470). Its N-terminal amino acid residues may bind inside the active site cleft of thrombin, while its C-terminal domain may interact with the basic fibrinogen recognition exosite of thrombin (PubMed:12044499). It does not inhibit plasmin, factor Xa (F10), and trypsin (PubMed:10502470).</text>
</comment>
<comment type="subcellular location">
    <subcellularLocation>
        <location evidence="2">Cytoplasmic vesicle</location>
        <location evidence="2">Secretory vesicle</location>
    </subcellularLocation>
    <subcellularLocation>
        <location evidence="10">Secreted</location>
    </subcellularLocation>
</comment>
<comment type="tissue specificity">
    <text evidence="10">Expressed in salivary glands.</text>
</comment>
<comment type="mass spectrometry" mass="12430.4" method="Electrospray" evidence="5"/>
<proteinExistence type="evidence at protein level"/>